<comment type="similarity">
    <text evidence="1">Belongs to the UPF0301 (AlgH) family.</text>
</comment>
<protein>
    <recommendedName>
        <fullName evidence="1">UPF0301 protein M446_6268</fullName>
    </recommendedName>
</protein>
<organism>
    <name type="scientific">Methylobacterium sp. (strain 4-46)</name>
    <dbReference type="NCBI Taxonomy" id="426117"/>
    <lineage>
        <taxon>Bacteria</taxon>
        <taxon>Pseudomonadati</taxon>
        <taxon>Pseudomonadota</taxon>
        <taxon>Alphaproteobacteria</taxon>
        <taxon>Hyphomicrobiales</taxon>
        <taxon>Methylobacteriaceae</taxon>
        <taxon>Methylobacterium</taxon>
    </lineage>
</organism>
<sequence>MRTRSAPDDTTAPGRASAAGYLDGQLLVAMPGMADERFARSVIYLCAHSAEGAMGIIVNKPAADLNMPDLLVQLDIIRQDDAIRLPNRVGHMPVLMGGPVESSRGFVLHSPDFHIDQSTLLIDDGICLTATVEILRAIAAGTGPRDAVLALGYAGWQPGQLESEIQANGWLHCPADPDLIFNAALDAKYDRALRAIGIEPAMLSMSAGHA</sequence>
<reference key="1">
    <citation type="submission" date="2008-02" db="EMBL/GenBank/DDBJ databases">
        <title>Complete sequence of chromosome of Methylobacterium sp. 4-46.</title>
        <authorList>
            <consortium name="US DOE Joint Genome Institute"/>
            <person name="Copeland A."/>
            <person name="Lucas S."/>
            <person name="Lapidus A."/>
            <person name="Glavina del Rio T."/>
            <person name="Dalin E."/>
            <person name="Tice H."/>
            <person name="Bruce D."/>
            <person name="Goodwin L."/>
            <person name="Pitluck S."/>
            <person name="Chertkov O."/>
            <person name="Brettin T."/>
            <person name="Detter J.C."/>
            <person name="Han C."/>
            <person name="Kuske C.R."/>
            <person name="Schmutz J."/>
            <person name="Larimer F."/>
            <person name="Land M."/>
            <person name="Hauser L."/>
            <person name="Kyrpides N."/>
            <person name="Ivanova N."/>
            <person name="Marx C.J."/>
            <person name="Richardson P."/>
        </authorList>
    </citation>
    <scope>NUCLEOTIDE SEQUENCE [LARGE SCALE GENOMIC DNA]</scope>
    <source>
        <strain>4-46</strain>
    </source>
</reference>
<gene>
    <name type="ordered locus">M446_6268</name>
</gene>
<evidence type="ECO:0000255" key="1">
    <source>
        <dbReference type="HAMAP-Rule" id="MF_00758"/>
    </source>
</evidence>
<accession>B0UR82</accession>
<dbReference type="EMBL" id="CP000943">
    <property type="protein sequence ID" value="ACA20534.1"/>
    <property type="molecule type" value="Genomic_DNA"/>
</dbReference>
<dbReference type="RefSeq" id="WP_012335912.1">
    <property type="nucleotide sequence ID" value="NC_010511.1"/>
</dbReference>
<dbReference type="SMR" id="B0UR82"/>
<dbReference type="STRING" id="426117.M446_6268"/>
<dbReference type="KEGG" id="met:M446_6268"/>
<dbReference type="eggNOG" id="COG1678">
    <property type="taxonomic scope" value="Bacteria"/>
</dbReference>
<dbReference type="HOGENOM" id="CLU_057596_1_0_5"/>
<dbReference type="GO" id="GO:0005829">
    <property type="term" value="C:cytosol"/>
    <property type="evidence" value="ECO:0007669"/>
    <property type="project" value="TreeGrafter"/>
</dbReference>
<dbReference type="Gene3D" id="3.40.1740.10">
    <property type="entry name" value="VC0467-like"/>
    <property type="match status" value="1"/>
</dbReference>
<dbReference type="HAMAP" id="MF_00758">
    <property type="entry name" value="UPF0301"/>
    <property type="match status" value="1"/>
</dbReference>
<dbReference type="InterPro" id="IPR003774">
    <property type="entry name" value="AlgH-like"/>
</dbReference>
<dbReference type="NCBIfam" id="NF001268">
    <property type="entry name" value="PRK00228.1-4"/>
    <property type="match status" value="1"/>
</dbReference>
<dbReference type="PANTHER" id="PTHR30327">
    <property type="entry name" value="UNCHARACTERIZED PROTEIN YQGE"/>
    <property type="match status" value="1"/>
</dbReference>
<dbReference type="PANTHER" id="PTHR30327:SF1">
    <property type="entry name" value="UPF0301 PROTEIN YQGE"/>
    <property type="match status" value="1"/>
</dbReference>
<dbReference type="Pfam" id="PF02622">
    <property type="entry name" value="DUF179"/>
    <property type="match status" value="1"/>
</dbReference>
<dbReference type="SUPFAM" id="SSF143456">
    <property type="entry name" value="VC0467-like"/>
    <property type="match status" value="1"/>
</dbReference>
<proteinExistence type="inferred from homology"/>
<name>Y6268_METS4</name>
<feature type="chain" id="PRO_1000198279" description="UPF0301 protein M446_6268">
    <location>
        <begin position="1"/>
        <end position="210"/>
    </location>
</feature>